<feature type="chain" id="PRO_0000436042" description="CST complex subunit TEN1">
    <location>
        <begin position="1"/>
        <end position="127"/>
    </location>
</feature>
<feature type="mutagenesis site" description="In mdo1-1/ten1-3; strong developmental defects and loss of in vitro interaction with STN1." evidence="1 2">
    <original>G</original>
    <variation>E</variation>
    <location>
        <position position="77"/>
    </location>
</feature>
<protein>
    <recommendedName>
        <fullName evidence="5">CST complex subunit TEN1</fullName>
    </recommendedName>
    <alternativeName>
        <fullName evidence="4">Protein MERISTEM DISORGANIZATION 1</fullName>
    </alternativeName>
    <alternativeName>
        <fullName evidence="5">Protein telomeric pathways with STN1 homolog</fullName>
    </alternativeName>
</protein>
<name>TEN1_ARATH</name>
<proteinExistence type="evidence at protein level"/>
<comment type="function">
    <text evidence="1 2 3">Required for the maintenance of meristems and stem cells through the reduction of DNA damage (PubMed:21781195). Promotes telomere integrity by maintaining telomere length and proper architecture of the chromosome terminus (PubMed:23572541). Negatively regulates telomerase repeat addition processivity (PubMed:23572541). Hampers contacts between enzymatically active telomerase and CST complex (PubMed:25329641).</text>
</comment>
<comment type="subunit">
    <text evidence="2 3">Component of the CST complex, composed of CTC1, TEN1 and STN1. Interacts with STN1 (PubMed:23572541, PubMed:25329641). No interaction with POT1A, but competes with it for STN1 binding (PubMed:25329641).</text>
</comment>
<comment type="subcellular location">
    <subcellularLocation>
        <location evidence="2">Nucleus</location>
    </subcellularLocation>
    <subcellularLocation>
        <location evidence="2">Chromosome</location>
        <location evidence="2">Telomere</location>
    </subcellularLocation>
    <text evidence="2">Associates transiently with telomeres.</text>
</comment>
<comment type="tissue specificity">
    <text evidence="1 2">Ubiquitous (PubMed:21781195, PubMed:23572541). High expression in meristematic tissues and in vasculature (PubMed:21781195).</text>
</comment>
<comment type="similarity">
    <text evidence="6">Belongs to the TEN1 family.</text>
</comment>
<comment type="sequence caution" evidence="6">
    <conflict type="erroneous gene model prediction">
        <sequence resource="EMBL-CDS" id="AAG50904"/>
    </conflict>
</comment>
<gene>
    <name evidence="5" type="primary">TEN1</name>
    <name evidence="4" type="synonym">MDO1</name>
    <name evidence="7" type="ordered locus">At1g56260</name>
    <name evidence="8" type="ORF">F14G9.13</name>
</gene>
<organism evidence="9">
    <name type="scientific">Arabidopsis thaliana</name>
    <name type="common">Mouse-ear cress</name>
    <dbReference type="NCBI Taxonomy" id="3702"/>
    <lineage>
        <taxon>Eukaryota</taxon>
        <taxon>Viridiplantae</taxon>
        <taxon>Streptophyta</taxon>
        <taxon>Embryophyta</taxon>
        <taxon>Tracheophyta</taxon>
        <taxon>Spermatophyta</taxon>
        <taxon>Magnoliopsida</taxon>
        <taxon>eudicotyledons</taxon>
        <taxon>Gunneridae</taxon>
        <taxon>Pentapetalae</taxon>
        <taxon>rosids</taxon>
        <taxon>malvids</taxon>
        <taxon>Brassicales</taxon>
        <taxon>Brassicaceae</taxon>
        <taxon>Camelineae</taxon>
        <taxon>Arabidopsis</taxon>
    </lineage>
</organism>
<accession>Q6NME7</accession>
<accession>Q9C7K1</accession>
<dbReference type="EMBL" id="AC069159">
    <property type="protein sequence ID" value="AAG50904.1"/>
    <property type="status" value="ALT_SEQ"/>
    <property type="molecule type" value="Genomic_DNA"/>
</dbReference>
<dbReference type="EMBL" id="CP002684">
    <property type="protein sequence ID" value="AEE33370.1"/>
    <property type="molecule type" value="Genomic_DNA"/>
</dbReference>
<dbReference type="EMBL" id="CP002684">
    <property type="protein sequence ID" value="ANM59369.1"/>
    <property type="molecule type" value="Genomic_DNA"/>
</dbReference>
<dbReference type="EMBL" id="BT011713">
    <property type="protein sequence ID" value="AAS49076.1"/>
    <property type="molecule type" value="mRNA"/>
</dbReference>
<dbReference type="EMBL" id="AK221533">
    <property type="protein sequence ID" value="BAD94861.1"/>
    <property type="molecule type" value="mRNA"/>
</dbReference>
<dbReference type="PIR" id="C96604">
    <property type="entry name" value="C96604"/>
</dbReference>
<dbReference type="RefSeq" id="NP_001321732.1">
    <property type="nucleotide sequence ID" value="NM_001333774.1"/>
</dbReference>
<dbReference type="RefSeq" id="NP_176022.2">
    <property type="nucleotide sequence ID" value="NM_104505.4"/>
</dbReference>
<dbReference type="SMR" id="Q6NME7"/>
<dbReference type="FunCoup" id="Q6NME7">
    <property type="interactions" value="20"/>
</dbReference>
<dbReference type="STRING" id="3702.Q6NME7"/>
<dbReference type="PaxDb" id="3702-AT1G56260.1"/>
<dbReference type="ProteomicsDB" id="234405"/>
<dbReference type="DNASU" id="842079"/>
<dbReference type="EnsemblPlants" id="AT1G56260.1">
    <property type="protein sequence ID" value="AT1G56260.1"/>
    <property type="gene ID" value="AT1G56260"/>
</dbReference>
<dbReference type="EnsemblPlants" id="AT1G56260.2">
    <property type="protein sequence ID" value="AT1G56260.2"/>
    <property type="gene ID" value="AT1G56260"/>
</dbReference>
<dbReference type="GeneID" id="842079"/>
<dbReference type="Gramene" id="AT1G56260.1">
    <property type="protein sequence ID" value="AT1G56260.1"/>
    <property type="gene ID" value="AT1G56260"/>
</dbReference>
<dbReference type="Gramene" id="AT1G56260.2">
    <property type="protein sequence ID" value="AT1G56260.2"/>
    <property type="gene ID" value="AT1G56260"/>
</dbReference>
<dbReference type="KEGG" id="ath:AT1G56260"/>
<dbReference type="Araport" id="AT1G56260"/>
<dbReference type="TAIR" id="AT1G56260">
    <property type="gene designation" value="MDO1"/>
</dbReference>
<dbReference type="eggNOG" id="ENOG502S1R3">
    <property type="taxonomic scope" value="Eukaryota"/>
</dbReference>
<dbReference type="HOGENOM" id="CLU_146825_0_0_1"/>
<dbReference type="InParanoid" id="Q6NME7"/>
<dbReference type="OMA" id="IQPNNEA"/>
<dbReference type="PhylomeDB" id="Q6NME7"/>
<dbReference type="PRO" id="PR:Q6NME7"/>
<dbReference type="Proteomes" id="UP000006548">
    <property type="component" value="Chromosome 1"/>
</dbReference>
<dbReference type="ExpressionAtlas" id="Q6NME7">
    <property type="expression patterns" value="baseline and differential"/>
</dbReference>
<dbReference type="GO" id="GO:0000781">
    <property type="term" value="C:chromosome, telomeric region"/>
    <property type="evidence" value="ECO:0000314"/>
    <property type="project" value="TAIR"/>
</dbReference>
<dbReference type="GO" id="GO:1990879">
    <property type="term" value="C:CST complex"/>
    <property type="evidence" value="ECO:0007669"/>
    <property type="project" value="InterPro"/>
</dbReference>
<dbReference type="GO" id="GO:0044183">
    <property type="term" value="F:protein folding chaperone"/>
    <property type="evidence" value="ECO:0000314"/>
    <property type="project" value="TAIR"/>
</dbReference>
<dbReference type="GO" id="GO:0003697">
    <property type="term" value="F:single-stranded DNA binding"/>
    <property type="evidence" value="ECO:0007669"/>
    <property type="project" value="InterPro"/>
</dbReference>
<dbReference type="GO" id="GO:0010521">
    <property type="term" value="F:telomerase inhibitor activity"/>
    <property type="evidence" value="ECO:0000314"/>
    <property type="project" value="TAIR"/>
</dbReference>
<dbReference type="GO" id="GO:0009408">
    <property type="term" value="P:response to heat"/>
    <property type="evidence" value="ECO:0000315"/>
    <property type="project" value="TAIR"/>
</dbReference>
<dbReference type="GO" id="GO:0048367">
    <property type="term" value="P:shoot system development"/>
    <property type="evidence" value="ECO:0000315"/>
    <property type="project" value="TAIR"/>
</dbReference>
<dbReference type="GO" id="GO:0019827">
    <property type="term" value="P:stem cell population maintenance"/>
    <property type="evidence" value="ECO:0000315"/>
    <property type="project" value="TAIR"/>
</dbReference>
<dbReference type="GO" id="GO:0000723">
    <property type="term" value="P:telomere maintenance"/>
    <property type="evidence" value="ECO:0000315"/>
    <property type="project" value="TAIR"/>
</dbReference>
<dbReference type="FunFam" id="2.40.50.140:FF:000410">
    <property type="entry name" value="CST complex subunit TEN1"/>
    <property type="match status" value="1"/>
</dbReference>
<dbReference type="Gene3D" id="2.40.50.140">
    <property type="entry name" value="Nucleic acid-binding proteins"/>
    <property type="match status" value="1"/>
</dbReference>
<dbReference type="InterPro" id="IPR012340">
    <property type="entry name" value="NA-bd_OB-fold"/>
</dbReference>
<dbReference type="InterPro" id="IPR029146">
    <property type="entry name" value="Ten1_animal_plant"/>
</dbReference>
<dbReference type="PANTHER" id="PTHR33905">
    <property type="entry name" value="CST COMPLEX SUBUNIT TEN1"/>
    <property type="match status" value="1"/>
</dbReference>
<dbReference type="PANTHER" id="PTHR33905:SF1">
    <property type="entry name" value="CST COMPLEX SUBUNIT TEN1"/>
    <property type="match status" value="1"/>
</dbReference>
<dbReference type="Pfam" id="PF15490">
    <property type="entry name" value="Ten1_2"/>
    <property type="match status" value="1"/>
</dbReference>
<keyword id="KW-0158">Chromosome</keyword>
<keyword id="KW-0539">Nucleus</keyword>
<keyword id="KW-1185">Reference proteome</keyword>
<keyword id="KW-0779">Telomere</keyword>
<reference key="1">
    <citation type="journal article" date="2000" name="Nature">
        <title>Sequence and analysis of chromosome 1 of the plant Arabidopsis thaliana.</title>
        <authorList>
            <person name="Theologis A."/>
            <person name="Ecker J.R."/>
            <person name="Palm C.J."/>
            <person name="Federspiel N.A."/>
            <person name="Kaul S."/>
            <person name="White O."/>
            <person name="Alonso J."/>
            <person name="Altafi H."/>
            <person name="Araujo R."/>
            <person name="Bowman C.L."/>
            <person name="Brooks S.Y."/>
            <person name="Buehler E."/>
            <person name="Chan A."/>
            <person name="Chao Q."/>
            <person name="Chen H."/>
            <person name="Cheuk R.F."/>
            <person name="Chin C.W."/>
            <person name="Chung M.K."/>
            <person name="Conn L."/>
            <person name="Conway A.B."/>
            <person name="Conway A.R."/>
            <person name="Creasy T.H."/>
            <person name="Dewar K."/>
            <person name="Dunn P."/>
            <person name="Etgu P."/>
            <person name="Feldblyum T.V."/>
            <person name="Feng J.-D."/>
            <person name="Fong B."/>
            <person name="Fujii C.Y."/>
            <person name="Gill J.E."/>
            <person name="Goldsmith A.D."/>
            <person name="Haas B."/>
            <person name="Hansen N.F."/>
            <person name="Hughes B."/>
            <person name="Huizar L."/>
            <person name="Hunter J.L."/>
            <person name="Jenkins J."/>
            <person name="Johnson-Hopson C."/>
            <person name="Khan S."/>
            <person name="Khaykin E."/>
            <person name="Kim C.J."/>
            <person name="Koo H.L."/>
            <person name="Kremenetskaia I."/>
            <person name="Kurtz D.B."/>
            <person name="Kwan A."/>
            <person name="Lam B."/>
            <person name="Langin-Hooper S."/>
            <person name="Lee A."/>
            <person name="Lee J.M."/>
            <person name="Lenz C.A."/>
            <person name="Li J.H."/>
            <person name="Li Y.-P."/>
            <person name="Lin X."/>
            <person name="Liu S.X."/>
            <person name="Liu Z.A."/>
            <person name="Luros J.S."/>
            <person name="Maiti R."/>
            <person name="Marziali A."/>
            <person name="Militscher J."/>
            <person name="Miranda M."/>
            <person name="Nguyen M."/>
            <person name="Nierman W.C."/>
            <person name="Osborne B.I."/>
            <person name="Pai G."/>
            <person name="Peterson J."/>
            <person name="Pham P.K."/>
            <person name="Rizzo M."/>
            <person name="Rooney T."/>
            <person name="Rowley D."/>
            <person name="Sakano H."/>
            <person name="Salzberg S.L."/>
            <person name="Schwartz J.R."/>
            <person name="Shinn P."/>
            <person name="Southwick A.M."/>
            <person name="Sun H."/>
            <person name="Tallon L.J."/>
            <person name="Tambunga G."/>
            <person name="Toriumi M.J."/>
            <person name="Town C.D."/>
            <person name="Utterback T."/>
            <person name="Van Aken S."/>
            <person name="Vaysberg M."/>
            <person name="Vysotskaia V.S."/>
            <person name="Walker M."/>
            <person name="Wu D."/>
            <person name="Yu G."/>
            <person name="Fraser C.M."/>
            <person name="Venter J.C."/>
            <person name="Davis R.W."/>
        </authorList>
    </citation>
    <scope>NUCLEOTIDE SEQUENCE [LARGE SCALE GENOMIC DNA]</scope>
    <source>
        <strain>cv. Columbia</strain>
    </source>
</reference>
<reference key="2">
    <citation type="journal article" date="2017" name="Plant J.">
        <title>Araport11: a complete reannotation of the Arabidopsis thaliana reference genome.</title>
        <authorList>
            <person name="Cheng C.Y."/>
            <person name="Krishnakumar V."/>
            <person name="Chan A.P."/>
            <person name="Thibaud-Nissen F."/>
            <person name="Schobel S."/>
            <person name="Town C.D."/>
        </authorList>
    </citation>
    <scope>GENOME REANNOTATION</scope>
    <source>
        <strain>cv. Columbia</strain>
    </source>
</reference>
<reference key="3">
    <citation type="submission" date="2004-03" db="EMBL/GenBank/DDBJ databases">
        <title>Arabidopsis ORF clones.</title>
        <authorList>
            <person name="Cheuk R."/>
            <person name="Chen H."/>
            <person name="Kim C.J."/>
            <person name="Shinn P."/>
            <person name="Carninci P."/>
            <person name="Hayashizaki Y."/>
            <person name="Ishida J."/>
            <person name="Kamiya A."/>
            <person name="Kawai J."/>
            <person name="Narusaka M."/>
            <person name="Sakurai T."/>
            <person name="Satou M."/>
            <person name="Seki M."/>
            <person name="Shinozaki K."/>
            <person name="Ecker J.R."/>
        </authorList>
    </citation>
    <scope>NUCLEOTIDE SEQUENCE [LARGE SCALE MRNA]</scope>
    <source>
        <strain>cv. Columbia</strain>
    </source>
</reference>
<reference key="4">
    <citation type="submission" date="2005-03" db="EMBL/GenBank/DDBJ databases">
        <title>Large-scale analysis of RIKEN Arabidopsis full-length (RAFL) cDNAs.</title>
        <authorList>
            <person name="Totoki Y."/>
            <person name="Seki M."/>
            <person name="Ishida J."/>
            <person name="Nakajima M."/>
            <person name="Enju A."/>
            <person name="Kamiya A."/>
            <person name="Narusaka M."/>
            <person name="Shin-i T."/>
            <person name="Nakagawa M."/>
            <person name="Sakamoto N."/>
            <person name="Oishi K."/>
            <person name="Kohara Y."/>
            <person name="Kobayashi M."/>
            <person name="Toyoda A."/>
            <person name="Sakaki Y."/>
            <person name="Sakurai T."/>
            <person name="Iida K."/>
            <person name="Akiyama K."/>
            <person name="Satou M."/>
            <person name="Toyoda T."/>
            <person name="Konagaya A."/>
            <person name="Carninci P."/>
            <person name="Kawai J."/>
            <person name="Hayashizaki Y."/>
            <person name="Shinozaki K."/>
        </authorList>
    </citation>
    <scope>NUCLEOTIDE SEQUENCE [LARGE SCALE MRNA]</scope>
    <source>
        <strain>cv. Columbia</strain>
    </source>
</reference>
<reference key="5">
    <citation type="journal article" date="2011" name="Plant J.">
        <title>The Arabidopsis MERISTEM DISORGANIZATION 1 gene is required for the maintenance of stem cells through the reduction of DNA damage.</title>
        <authorList>
            <person name="Hashimura Y."/>
            <person name="Ueguchi C."/>
        </authorList>
    </citation>
    <scope>FUNCTION</scope>
    <scope>MUTAGENESIS OF GLY-77</scope>
    <scope>TISSUE SPECIFICITY</scope>
</reference>
<reference key="6">
    <citation type="journal article" date="2013" name="Plant Cell">
        <title>MERISTEM DISORGANIZATION1 encodes TEN1, an essential telomere protein that modulates telomerase processivity in Arabidopsis.</title>
        <authorList>
            <person name="Leehy K.A."/>
            <person name="Lee J.R."/>
            <person name="Song X."/>
            <person name="Renfrew K.B."/>
            <person name="Shippen D.E."/>
        </authorList>
    </citation>
    <scope>FUNCTION</scope>
    <scope>TISSUE SPECIFICITY</scope>
    <scope>INTERACTION WITH STN1</scope>
    <scope>SUBCELLULAR LOCATION</scope>
    <scope>MUTAGENESIS OF GLY-77</scope>
</reference>
<reference key="7">
    <citation type="journal article" date="2014" name="PLoS Genet.">
        <title>POT1a and components of CST engage telomerase and regulate its activity in Arabidopsis.</title>
        <authorList>
            <person name="Renfrew K.B."/>
            <person name="Song X."/>
            <person name="Lee J.R."/>
            <person name="Arora A."/>
            <person name="Shippen D.E."/>
        </authorList>
    </citation>
    <scope>FUNCTION</scope>
    <scope>INTERACTION WITH STN1 AND POT1A</scope>
</reference>
<sequence>MAKSQIEPGVPITLQELYPSSLFYKEGVSLRVTAMLRGYSVETAIGVIEDGGRSLKINTQNIRDVSFRVGSIYQFIGELHIEQPNNEAILQARTGRNVDGIDMNLYRKTIELLRQFLKEEDNSNMVE</sequence>
<evidence type="ECO:0000269" key="1">
    <source>
    </source>
</evidence>
<evidence type="ECO:0000269" key="2">
    <source>
    </source>
</evidence>
<evidence type="ECO:0000269" key="3">
    <source>
    </source>
</evidence>
<evidence type="ECO:0000303" key="4">
    <source>
    </source>
</evidence>
<evidence type="ECO:0000303" key="5">
    <source>
    </source>
</evidence>
<evidence type="ECO:0000305" key="6"/>
<evidence type="ECO:0000312" key="7">
    <source>
        <dbReference type="Araport" id="AT1G56260"/>
    </source>
</evidence>
<evidence type="ECO:0000312" key="8">
    <source>
        <dbReference type="EMBL" id="AAG50904.1"/>
    </source>
</evidence>
<evidence type="ECO:0000312" key="9">
    <source>
        <dbReference type="EMBL" id="AAS49076.1"/>
    </source>
</evidence>